<proteinExistence type="evidence at protein level"/>
<dbReference type="EMBL" id="AF309774">
    <property type="protein sequence ID" value="AAM93270.1"/>
    <property type="molecule type" value="mRNA"/>
</dbReference>
<dbReference type="EMBL" id="AK025039">
    <property type="protein sequence ID" value="BAB15055.1"/>
    <property type="molecule type" value="mRNA"/>
</dbReference>
<dbReference type="EMBL" id="AK025080">
    <property type="protein sequence ID" value="BAB15061.1"/>
    <property type="status" value="ALT_INIT"/>
    <property type="molecule type" value="mRNA"/>
</dbReference>
<dbReference type="EMBL" id="AK026445">
    <property type="protein sequence ID" value="BAB15485.1"/>
    <property type="status" value="ALT_SEQ"/>
    <property type="molecule type" value="mRNA"/>
</dbReference>
<dbReference type="EMBL" id="AK290360">
    <property type="protein sequence ID" value="BAF83049.1"/>
    <property type="molecule type" value="mRNA"/>
</dbReference>
<dbReference type="EMBL" id="AK314295">
    <property type="protein sequence ID" value="BAG36950.1"/>
    <property type="molecule type" value="mRNA"/>
</dbReference>
<dbReference type="EMBL" id="AL117325">
    <property type="status" value="NOT_ANNOTATED_CDS"/>
    <property type="molecule type" value="Genomic_DNA"/>
</dbReference>
<dbReference type="EMBL" id="Z82216">
    <property type="status" value="NOT_ANNOTATED_CDS"/>
    <property type="molecule type" value="Genomic_DNA"/>
</dbReference>
<dbReference type="EMBL" id="CH471104">
    <property type="protein sequence ID" value="EAW98561.1"/>
    <property type="molecule type" value="Genomic_DNA"/>
</dbReference>
<dbReference type="EMBL" id="BC017500">
    <property type="protein sequence ID" value="AAH17500.1"/>
    <property type="molecule type" value="mRNA"/>
</dbReference>
<dbReference type="CCDS" id="CCDS14452.1">
    <molecule id="Q8WVV4-2"/>
</dbReference>
<dbReference type="CCDS" id="CCDS78497.1">
    <molecule id="Q8WVV4-1"/>
</dbReference>
<dbReference type="RefSeq" id="NP_001294869.1">
    <molecule id="Q8WVV4-1"/>
    <property type="nucleotide sequence ID" value="NM_001307940.2"/>
</dbReference>
<dbReference type="RefSeq" id="NP_079197.3">
    <molecule id="Q8WVV4-2"/>
    <property type="nucleotide sequence ID" value="NM_024921.3"/>
</dbReference>
<dbReference type="PDB" id="3BH9">
    <property type="method" value="X-ray"/>
    <property type="resolution" value="1.70 A"/>
    <property type="chains" value="C=53-62"/>
</dbReference>
<dbReference type="PDBsum" id="3BH9"/>
<dbReference type="SMR" id="Q8WVV4"/>
<dbReference type="BioGRID" id="123048">
    <property type="interactions" value="258"/>
</dbReference>
<dbReference type="FunCoup" id="Q8WVV4">
    <property type="interactions" value="522"/>
</dbReference>
<dbReference type="IntAct" id="Q8WVV4">
    <property type="interactions" value="149"/>
</dbReference>
<dbReference type="MINT" id="Q8WVV4"/>
<dbReference type="STRING" id="9606.ENSP00000362238"/>
<dbReference type="GlyGen" id="Q8WVV4">
    <property type="glycosylation" value="1 site, 1 O-linked glycan (1 site)"/>
</dbReference>
<dbReference type="iPTMnet" id="Q8WVV4"/>
<dbReference type="PhosphoSitePlus" id="Q8WVV4"/>
<dbReference type="SwissPalm" id="Q8WVV4"/>
<dbReference type="BioMuta" id="POF1B"/>
<dbReference type="DMDM" id="332278224"/>
<dbReference type="jPOST" id="Q8WVV4"/>
<dbReference type="MassIVE" id="Q8WVV4"/>
<dbReference type="PaxDb" id="9606-ENSP00000262753"/>
<dbReference type="PeptideAtlas" id="Q8WVV4"/>
<dbReference type="PRIDE" id="Q8WVV4"/>
<dbReference type="ProteomicsDB" id="74820">
    <molecule id="Q8WVV4-2"/>
</dbReference>
<dbReference type="ProteomicsDB" id="74821">
    <molecule id="Q8WVV4-1"/>
</dbReference>
<dbReference type="ProteomicsDB" id="74822">
    <molecule id="Q8WVV4-3"/>
</dbReference>
<dbReference type="Pumba" id="Q8WVV4"/>
<dbReference type="Antibodypedia" id="453">
    <property type="antibodies" value="99 antibodies from 22 providers"/>
</dbReference>
<dbReference type="DNASU" id="79983"/>
<dbReference type="Ensembl" id="ENST00000262753.9">
    <molecule id="Q8WVV4-2"/>
    <property type="protein sequence ID" value="ENSP00000262753.4"/>
    <property type="gene ID" value="ENSG00000124429.18"/>
</dbReference>
<dbReference type="Ensembl" id="ENST00000373145.3">
    <molecule id="Q8WVV4-1"/>
    <property type="protein sequence ID" value="ENSP00000362238.3"/>
    <property type="gene ID" value="ENSG00000124429.18"/>
</dbReference>
<dbReference type="GeneID" id="79983"/>
<dbReference type="KEGG" id="hsa:79983"/>
<dbReference type="MANE-Select" id="ENST00000262753.9">
    <property type="protein sequence ID" value="ENSP00000262753.4"/>
    <property type="RefSeq nucleotide sequence ID" value="NM_024921.4"/>
    <property type="RefSeq protein sequence ID" value="NP_079197.3"/>
</dbReference>
<dbReference type="UCSC" id="uc004eer.3">
    <molecule id="Q8WVV4-2"/>
    <property type="organism name" value="human"/>
</dbReference>
<dbReference type="AGR" id="HGNC:13711"/>
<dbReference type="CTD" id="79983"/>
<dbReference type="DisGeNET" id="79983"/>
<dbReference type="GeneCards" id="POF1B"/>
<dbReference type="HGNC" id="HGNC:13711">
    <property type="gene designation" value="POF1B"/>
</dbReference>
<dbReference type="HPA" id="ENSG00000124429">
    <property type="expression patterns" value="Tissue enhanced (intestine, skin)"/>
</dbReference>
<dbReference type="MalaCards" id="POF1B"/>
<dbReference type="MIM" id="300603">
    <property type="type" value="gene"/>
</dbReference>
<dbReference type="MIM" id="300604">
    <property type="type" value="phenotype"/>
</dbReference>
<dbReference type="neXtProt" id="NX_Q8WVV4"/>
<dbReference type="OpenTargets" id="ENSG00000124429"/>
<dbReference type="PharmGKB" id="PA134937695"/>
<dbReference type="VEuPathDB" id="HostDB:ENSG00000124429"/>
<dbReference type="eggNOG" id="ENOG502QRUE">
    <property type="taxonomic scope" value="Eukaryota"/>
</dbReference>
<dbReference type="GeneTree" id="ENSGT00390000000141"/>
<dbReference type="HOGENOM" id="CLU_031293_0_0_1"/>
<dbReference type="InParanoid" id="Q8WVV4"/>
<dbReference type="OMA" id="HHYYRRQ"/>
<dbReference type="OrthoDB" id="9830956at2759"/>
<dbReference type="PAN-GO" id="Q8WVV4">
    <property type="GO annotations" value="7 GO annotations based on evolutionary models"/>
</dbReference>
<dbReference type="TreeFam" id="TF331412"/>
<dbReference type="PathwayCommons" id="Q8WVV4"/>
<dbReference type="SignaLink" id="Q8WVV4"/>
<dbReference type="BioGRID-ORCS" id="79983">
    <property type="hits" value="14 hits in 762 CRISPR screens"/>
</dbReference>
<dbReference type="ChiTaRS" id="POF1B">
    <property type="organism name" value="human"/>
</dbReference>
<dbReference type="EvolutionaryTrace" id="Q8WVV4"/>
<dbReference type="GeneWiki" id="POF1B"/>
<dbReference type="GenomeRNAi" id="79983"/>
<dbReference type="Pharos" id="Q8WVV4">
    <property type="development level" value="Tbio"/>
</dbReference>
<dbReference type="PRO" id="PR:Q8WVV4"/>
<dbReference type="Proteomes" id="UP000005640">
    <property type="component" value="Chromosome X"/>
</dbReference>
<dbReference type="RNAct" id="Q8WVV4">
    <property type="molecule type" value="protein"/>
</dbReference>
<dbReference type="Bgee" id="ENSG00000124429">
    <property type="expression patterns" value="Expressed in upper arm skin and 124 other cell types or tissues"/>
</dbReference>
<dbReference type="GO" id="GO:0005884">
    <property type="term" value="C:actin filament"/>
    <property type="evidence" value="ECO:0000314"/>
    <property type="project" value="UniProtKB"/>
</dbReference>
<dbReference type="GO" id="GO:0005912">
    <property type="term" value="C:adherens junction"/>
    <property type="evidence" value="ECO:0000314"/>
    <property type="project" value="UniProtKB"/>
</dbReference>
<dbReference type="GO" id="GO:0005923">
    <property type="term" value="C:bicellular tight junction"/>
    <property type="evidence" value="ECO:0000314"/>
    <property type="project" value="UniProtKB"/>
</dbReference>
<dbReference type="GO" id="GO:0030057">
    <property type="term" value="C:desmosome"/>
    <property type="evidence" value="ECO:0000314"/>
    <property type="project" value="MGI"/>
</dbReference>
<dbReference type="GO" id="GO:0051015">
    <property type="term" value="F:actin filament binding"/>
    <property type="evidence" value="ECO:0000315"/>
    <property type="project" value="UniProtKB"/>
</dbReference>
<dbReference type="GO" id="GO:0030036">
    <property type="term" value="P:actin cytoskeleton organization"/>
    <property type="evidence" value="ECO:0000315"/>
    <property type="project" value="UniProtKB"/>
</dbReference>
<dbReference type="GO" id="GO:0007015">
    <property type="term" value="P:actin filament organization"/>
    <property type="evidence" value="ECO:0000315"/>
    <property type="project" value="UniProtKB"/>
</dbReference>
<dbReference type="GO" id="GO:0070830">
    <property type="term" value="P:bicellular tight junction assembly"/>
    <property type="evidence" value="ECO:0000315"/>
    <property type="project" value="UniProtKB"/>
</dbReference>
<dbReference type="GO" id="GO:0003382">
    <property type="term" value="P:epithelial cell morphogenesis"/>
    <property type="evidence" value="ECO:0000315"/>
    <property type="project" value="UniProtKB"/>
</dbReference>
<dbReference type="InterPro" id="IPR026186">
    <property type="entry name" value="POF1B"/>
</dbReference>
<dbReference type="InterPro" id="IPR056240">
    <property type="entry name" value="POF1B_HlH"/>
</dbReference>
<dbReference type="PANTHER" id="PTHR22546">
    <property type="entry name" value="PREMATURE OVARIAN FAILURE, 1B"/>
    <property type="match status" value="1"/>
</dbReference>
<dbReference type="PANTHER" id="PTHR22546:SF0">
    <property type="entry name" value="PROTEIN POF1B"/>
    <property type="match status" value="1"/>
</dbReference>
<dbReference type="Pfam" id="PF24617">
    <property type="entry name" value="POF1B_HlH"/>
    <property type="match status" value="1"/>
</dbReference>
<keyword id="KW-0002">3D-structure</keyword>
<keyword id="KW-0009">Actin-binding</keyword>
<keyword id="KW-0025">Alternative splicing</keyword>
<keyword id="KW-0965">Cell junction</keyword>
<keyword id="KW-0175">Coiled coil</keyword>
<keyword id="KW-0225">Disease variant</keyword>
<keyword id="KW-1066">Premature ovarian failure</keyword>
<keyword id="KW-1267">Proteomics identification</keyword>
<keyword id="KW-1185">Reference proteome</keyword>
<keyword id="KW-0796">Tight junction</keyword>
<feature type="chain" id="PRO_0000253911" description="Protein POF1B">
    <location>
        <begin position="1"/>
        <end position="589"/>
    </location>
</feature>
<feature type="coiled-coil region" evidence="1">
    <location>
        <begin position="334"/>
        <end position="443"/>
    </location>
</feature>
<feature type="splice variant" id="VSP_021149" description="In isoform 3." evidence="9">
    <original>GSKQDFESTDESEDIESLIPKGL</original>
    <variation>RKQSLSSTYTIRHGIQTKRTGIL</variation>
    <location>
        <begin position="284"/>
        <end position="306"/>
    </location>
</feature>
<feature type="splice variant" id="VSP_021150" description="In isoform 3." evidence="9">
    <location>
        <begin position="307"/>
        <end position="589"/>
    </location>
</feature>
<feature type="splice variant" id="VSP_021151" description="In isoform 1." evidence="10">
    <original>P</original>
    <variation>VSSLGHF</variation>
    <location>
        <position position="589"/>
    </location>
</feature>
<feature type="sequence variant" id="VAR_028753" description="In dbSNP:rs363766.">
    <original>P</original>
    <variation>S</variation>
    <location>
        <position position="207"/>
    </location>
</feature>
<feature type="sequence variant" id="VAR_028754" description="In dbSNP:rs147563033." evidence="3">
    <original>C</original>
    <variation>S</variation>
    <location>
        <position position="239"/>
    </location>
</feature>
<feature type="sequence variant" id="VAR_028755" description="In dbSNP:rs363751.">
    <original>E</original>
    <variation>A</variation>
    <location>
        <position position="296"/>
    </location>
</feature>
<feature type="sequence variant" id="VAR_028756" description="In dbSNP:rs363775.">
    <original>M</original>
    <variation>V</variation>
    <location>
        <position position="323"/>
    </location>
</feature>
<feature type="sequence variant" id="VAR_028757" description="In POF2B; disrupts binding to non-muscle actin filaments; abolishes tight junction localization; altered ciliogenesis and cystogenesis; dbSNP:rs75398746." evidence="3 5 6 7">
    <original>R</original>
    <variation>Q</variation>
    <location>
        <position position="329"/>
    </location>
</feature>
<feature type="sequence variant" id="VAR_028758" description="In dbSNP:rs363774." evidence="2 3 4 8">
    <original>M</original>
    <variation>L</variation>
    <location>
        <position position="349"/>
    </location>
</feature>
<feature type="sequence variant" id="VAR_028759" description="In dbSNP:rs139385491." evidence="3">
    <original>Q</original>
    <variation>K</variation>
    <location>
        <position position="434"/>
    </location>
</feature>
<feature type="sequence variant" id="VAR_028760" description="In dbSNP:rs768162591." evidence="3">
    <original>C</original>
    <variation>Y</variation>
    <location>
        <position position="444"/>
    </location>
</feature>
<feature type="sequence conflict" description="In Ref. 1; AAM93270." evidence="11" ref="1">
    <original>Q</original>
    <variation>E</variation>
    <location>
        <position position="180"/>
    </location>
</feature>
<feature type="sequence conflict" description="In Ref. 2; BAB15485." evidence="11" ref="2">
    <original>L</original>
    <variation>F</variation>
    <location>
        <position position="503"/>
    </location>
</feature>
<reference key="1">
    <citation type="journal article" date="2004" name="Hum. Reprod.">
        <title>Mutation analysis of two candidate genes for premature ovarian failure, DACH2 and POF1B.</title>
        <authorList>
            <person name="Bione S."/>
            <person name="Rizzolio F."/>
            <person name="Sala C."/>
            <person name="Ricotti R."/>
            <person name="Goegan M."/>
            <person name="Manzini M.C."/>
            <person name="Battaglia R."/>
            <person name="Marozzi A."/>
            <person name="Vegetti W."/>
            <person name="Dalpra L."/>
            <person name="Crosignani P.G."/>
            <person name="Ginelli E."/>
            <person name="Nappi R."/>
            <person name="Bernabini S."/>
            <person name="Bruni V."/>
            <person name="Torricelli F."/>
            <person name="Zuffardi O."/>
            <person name="Toniolo D."/>
        </authorList>
    </citation>
    <scope>NUCLEOTIDE SEQUENCE [MRNA] (ISOFORM 2)</scope>
    <scope>VARIANTS SER-239; GLN-329; LEU-349; LYS-434 AND TYR-444</scope>
</reference>
<reference key="2">
    <citation type="journal article" date="2004" name="Nat. Genet.">
        <title>Complete sequencing and characterization of 21,243 full-length human cDNAs.</title>
        <authorList>
            <person name="Ota T."/>
            <person name="Suzuki Y."/>
            <person name="Nishikawa T."/>
            <person name="Otsuki T."/>
            <person name="Sugiyama T."/>
            <person name="Irie R."/>
            <person name="Wakamatsu A."/>
            <person name="Hayashi K."/>
            <person name="Sato H."/>
            <person name="Nagai K."/>
            <person name="Kimura K."/>
            <person name="Makita H."/>
            <person name="Sekine M."/>
            <person name="Obayashi M."/>
            <person name="Nishi T."/>
            <person name="Shibahara T."/>
            <person name="Tanaka T."/>
            <person name="Ishii S."/>
            <person name="Yamamoto J."/>
            <person name="Saito K."/>
            <person name="Kawai Y."/>
            <person name="Isono Y."/>
            <person name="Nakamura Y."/>
            <person name="Nagahari K."/>
            <person name="Murakami K."/>
            <person name="Yasuda T."/>
            <person name="Iwayanagi T."/>
            <person name="Wagatsuma M."/>
            <person name="Shiratori A."/>
            <person name="Sudo H."/>
            <person name="Hosoiri T."/>
            <person name="Kaku Y."/>
            <person name="Kodaira H."/>
            <person name="Kondo H."/>
            <person name="Sugawara M."/>
            <person name="Takahashi M."/>
            <person name="Kanda K."/>
            <person name="Yokoi T."/>
            <person name="Furuya T."/>
            <person name="Kikkawa E."/>
            <person name="Omura Y."/>
            <person name="Abe K."/>
            <person name="Kamihara K."/>
            <person name="Katsuta N."/>
            <person name="Sato K."/>
            <person name="Tanikawa M."/>
            <person name="Yamazaki M."/>
            <person name="Ninomiya K."/>
            <person name="Ishibashi T."/>
            <person name="Yamashita H."/>
            <person name="Murakawa K."/>
            <person name="Fujimori K."/>
            <person name="Tanai H."/>
            <person name="Kimata M."/>
            <person name="Watanabe M."/>
            <person name="Hiraoka S."/>
            <person name="Chiba Y."/>
            <person name="Ishida S."/>
            <person name="Ono Y."/>
            <person name="Takiguchi S."/>
            <person name="Watanabe S."/>
            <person name="Yosida M."/>
            <person name="Hotuta T."/>
            <person name="Kusano J."/>
            <person name="Kanehori K."/>
            <person name="Takahashi-Fujii A."/>
            <person name="Hara H."/>
            <person name="Tanase T.-O."/>
            <person name="Nomura Y."/>
            <person name="Togiya S."/>
            <person name="Komai F."/>
            <person name="Hara R."/>
            <person name="Takeuchi K."/>
            <person name="Arita M."/>
            <person name="Imose N."/>
            <person name="Musashino K."/>
            <person name="Yuuki H."/>
            <person name="Oshima A."/>
            <person name="Sasaki N."/>
            <person name="Aotsuka S."/>
            <person name="Yoshikawa Y."/>
            <person name="Matsunawa H."/>
            <person name="Ichihara T."/>
            <person name="Shiohata N."/>
            <person name="Sano S."/>
            <person name="Moriya S."/>
            <person name="Momiyama H."/>
            <person name="Satoh N."/>
            <person name="Takami S."/>
            <person name="Terashima Y."/>
            <person name="Suzuki O."/>
            <person name="Nakagawa S."/>
            <person name="Senoh A."/>
            <person name="Mizoguchi H."/>
            <person name="Goto Y."/>
            <person name="Shimizu F."/>
            <person name="Wakebe H."/>
            <person name="Hishigaki H."/>
            <person name="Watanabe T."/>
            <person name="Sugiyama A."/>
            <person name="Takemoto M."/>
            <person name="Kawakami B."/>
            <person name="Yamazaki M."/>
            <person name="Watanabe K."/>
            <person name="Kumagai A."/>
            <person name="Itakura S."/>
            <person name="Fukuzumi Y."/>
            <person name="Fujimori Y."/>
            <person name="Komiyama M."/>
            <person name="Tashiro H."/>
            <person name="Tanigami A."/>
            <person name="Fujiwara T."/>
            <person name="Ono T."/>
            <person name="Yamada K."/>
            <person name="Fujii Y."/>
            <person name="Ozaki K."/>
            <person name="Hirao M."/>
            <person name="Ohmori Y."/>
            <person name="Kawabata A."/>
            <person name="Hikiji T."/>
            <person name="Kobatake N."/>
            <person name="Inagaki H."/>
            <person name="Ikema Y."/>
            <person name="Okamoto S."/>
            <person name="Okitani R."/>
            <person name="Kawakami T."/>
            <person name="Noguchi S."/>
            <person name="Itoh T."/>
            <person name="Shigeta K."/>
            <person name="Senba T."/>
            <person name="Matsumura K."/>
            <person name="Nakajima Y."/>
            <person name="Mizuno T."/>
            <person name="Morinaga M."/>
            <person name="Sasaki M."/>
            <person name="Togashi T."/>
            <person name="Oyama M."/>
            <person name="Hata H."/>
            <person name="Watanabe M."/>
            <person name="Komatsu T."/>
            <person name="Mizushima-Sugano J."/>
            <person name="Satoh T."/>
            <person name="Shirai Y."/>
            <person name="Takahashi Y."/>
            <person name="Nakagawa K."/>
            <person name="Okumura K."/>
            <person name="Nagase T."/>
            <person name="Nomura N."/>
            <person name="Kikuchi H."/>
            <person name="Masuho Y."/>
            <person name="Yamashita R."/>
            <person name="Nakai K."/>
            <person name="Yada T."/>
            <person name="Nakamura Y."/>
            <person name="Ohara O."/>
            <person name="Isogai T."/>
            <person name="Sugano S."/>
        </authorList>
    </citation>
    <scope>NUCLEOTIDE SEQUENCE [LARGE SCALE MRNA] (ISOFORMS 2 AND 3)</scope>
    <scope>VARIANT LEU-349</scope>
    <source>
        <tissue>Colon</tissue>
        <tissue>Ileal mucosa</tissue>
        <tissue>Placenta</tissue>
        <tissue>Tongue</tissue>
    </source>
</reference>
<reference key="3">
    <citation type="journal article" date="2005" name="Nature">
        <title>The DNA sequence of the human X chromosome.</title>
        <authorList>
            <person name="Ross M.T."/>
            <person name="Grafham D.V."/>
            <person name="Coffey A.J."/>
            <person name="Scherer S."/>
            <person name="McLay K."/>
            <person name="Muzny D."/>
            <person name="Platzer M."/>
            <person name="Howell G.R."/>
            <person name="Burrows C."/>
            <person name="Bird C.P."/>
            <person name="Frankish A."/>
            <person name="Lovell F.L."/>
            <person name="Howe K.L."/>
            <person name="Ashurst J.L."/>
            <person name="Fulton R.S."/>
            <person name="Sudbrak R."/>
            <person name="Wen G."/>
            <person name="Jones M.C."/>
            <person name="Hurles M.E."/>
            <person name="Andrews T.D."/>
            <person name="Scott C.E."/>
            <person name="Searle S."/>
            <person name="Ramser J."/>
            <person name="Whittaker A."/>
            <person name="Deadman R."/>
            <person name="Carter N.P."/>
            <person name="Hunt S.E."/>
            <person name="Chen R."/>
            <person name="Cree A."/>
            <person name="Gunaratne P."/>
            <person name="Havlak P."/>
            <person name="Hodgson A."/>
            <person name="Metzker M.L."/>
            <person name="Richards S."/>
            <person name="Scott G."/>
            <person name="Steffen D."/>
            <person name="Sodergren E."/>
            <person name="Wheeler D.A."/>
            <person name="Worley K.C."/>
            <person name="Ainscough R."/>
            <person name="Ambrose K.D."/>
            <person name="Ansari-Lari M.A."/>
            <person name="Aradhya S."/>
            <person name="Ashwell R.I."/>
            <person name="Babbage A.K."/>
            <person name="Bagguley C.L."/>
            <person name="Ballabio A."/>
            <person name="Banerjee R."/>
            <person name="Barker G.E."/>
            <person name="Barlow K.F."/>
            <person name="Barrett I.P."/>
            <person name="Bates K.N."/>
            <person name="Beare D.M."/>
            <person name="Beasley H."/>
            <person name="Beasley O."/>
            <person name="Beck A."/>
            <person name="Bethel G."/>
            <person name="Blechschmidt K."/>
            <person name="Brady N."/>
            <person name="Bray-Allen S."/>
            <person name="Bridgeman A.M."/>
            <person name="Brown A.J."/>
            <person name="Brown M.J."/>
            <person name="Bonnin D."/>
            <person name="Bruford E.A."/>
            <person name="Buhay C."/>
            <person name="Burch P."/>
            <person name="Burford D."/>
            <person name="Burgess J."/>
            <person name="Burrill W."/>
            <person name="Burton J."/>
            <person name="Bye J.M."/>
            <person name="Carder C."/>
            <person name="Carrel L."/>
            <person name="Chako J."/>
            <person name="Chapman J.C."/>
            <person name="Chavez D."/>
            <person name="Chen E."/>
            <person name="Chen G."/>
            <person name="Chen Y."/>
            <person name="Chen Z."/>
            <person name="Chinault C."/>
            <person name="Ciccodicola A."/>
            <person name="Clark S.Y."/>
            <person name="Clarke G."/>
            <person name="Clee C.M."/>
            <person name="Clegg S."/>
            <person name="Clerc-Blankenburg K."/>
            <person name="Clifford K."/>
            <person name="Cobley V."/>
            <person name="Cole C.G."/>
            <person name="Conquer J.S."/>
            <person name="Corby N."/>
            <person name="Connor R.E."/>
            <person name="David R."/>
            <person name="Davies J."/>
            <person name="Davis C."/>
            <person name="Davis J."/>
            <person name="Delgado O."/>
            <person name="Deshazo D."/>
            <person name="Dhami P."/>
            <person name="Ding Y."/>
            <person name="Dinh H."/>
            <person name="Dodsworth S."/>
            <person name="Draper H."/>
            <person name="Dugan-Rocha S."/>
            <person name="Dunham A."/>
            <person name="Dunn M."/>
            <person name="Durbin K.J."/>
            <person name="Dutta I."/>
            <person name="Eades T."/>
            <person name="Ellwood M."/>
            <person name="Emery-Cohen A."/>
            <person name="Errington H."/>
            <person name="Evans K.L."/>
            <person name="Faulkner L."/>
            <person name="Francis F."/>
            <person name="Frankland J."/>
            <person name="Fraser A.E."/>
            <person name="Galgoczy P."/>
            <person name="Gilbert J."/>
            <person name="Gill R."/>
            <person name="Gloeckner G."/>
            <person name="Gregory S.G."/>
            <person name="Gribble S."/>
            <person name="Griffiths C."/>
            <person name="Grocock R."/>
            <person name="Gu Y."/>
            <person name="Gwilliam R."/>
            <person name="Hamilton C."/>
            <person name="Hart E.A."/>
            <person name="Hawes A."/>
            <person name="Heath P.D."/>
            <person name="Heitmann K."/>
            <person name="Hennig S."/>
            <person name="Hernandez J."/>
            <person name="Hinzmann B."/>
            <person name="Ho S."/>
            <person name="Hoffs M."/>
            <person name="Howden P.J."/>
            <person name="Huckle E.J."/>
            <person name="Hume J."/>
            <person name="Hunt P.J."/>
            <person name="Hunt A.R."/>
            <person name="Isherwood J."/>
            <person name="Jacob L."/>
            <person name="Johnson D."/>
            <person name="Jones S."/>
            <person name="de Jong P.J."/>
            <person name="Joseph S.S."/>
            <person name="Keenan S."/>
            <person name="Kelly S."/>
            <person name="Kershaw J.K."/>
            <person name="Khan Z."/>
            <person name="Kioschis P."/>
            <person name="Klages S."/>
            <person name="Knights A.J."/>
            <person name="Kosiura A."/>
            <person name="Kovar-Smith C."/>
            <person name="Laird G.K."/>
            <person name="Langford C."/>
            <person name="Lawlor S."/>
            <person name="Leversha M."/>
            <person name="Lewis L."/>
            <person name="Liu W."/>
            <person name="Lloyd C."/>
            <person name="Lloyd D.M."/>
            <person name="Loulseged H."/>
            <person name="Loveland J.E."/>
            <person name="Lovell J.D."/>
            <person name="Lozado R."/>
            <person name="Lu J."/>
            <person name="Lyne R."/>
            <person name="Ma J."/>
            <person name="Maheshwari M."/>
            <person name="Matthews L.H."/>
            <person name="McDowall J."/>
            <person name="McLaren S."/>
            <person name="McMurray A."/>
            <person name="Meidl P."/>
            <person name="Meitinger T."/>
            <person name="Milne S."/>
            <person name="Miner G."/>
            <person name="Mistry S.L."/>
            <person name="Morgan M."/>
            <person name="Morris S."/>
            <person name="Mueller I."/>
            <person name="Mullikin J.C."/>
            <person name="Nguyen N."/>
            <person name="Nordsiek G."/>
            <person name="Nyakatura G."/>
            <person name="O'dell C.N."/>
            <person name="Okwuonu G."/>
            <person name="Palmer S."/>
            <person name="Pandian R."/>
            <person name="Parker D."/>
            <person name="Parrish J."/>
            <person name="Pasternak S."/>
            <person name="Patel D."/>
            <person name="Pearce A.V."/>
            <person name="Pearson D.M."/>
            <person name="Pelan S.E."/>
            <person name="Perez L."/>
            <person name="Porter K.M."/>
            <person name="Ramsey Y."/>
            <person name="Reichwald K."/>
            <person name="Rhodes S."/>
            <person name="Ridler K.A."/>
            <person name="Schlessinger D."/>
            <person name="Schueler M.G."/>
            <person name="Sehra H.K."/>
            <person name="Shaw-Smith C."/>
            <person name="Shen H."/>
            <person name="Sheridan E.M."/>
            <person name="Shownkeen R."/>
            <person name="Skuce C.D."/>
            <person name="Smith M.L."/>
            <person name="Sotheran E.C."/>
            <person name="Steingruber H.E."/>
            <person name="Steward C.A."/>
            <person name="Storey R."/>
            <person name="Swann R.M."/>
            <person name="Swarbreck D."/>
            <person name="Tabor P.E."/>
            <person name="Taudien S."/>
            <person name="Taylor T."/>
            <person name="Teague B."/>
            <person name="Thomas K."/>
            <person name="Thorpe A."/>
            <person name="Timms K."/>
            <person name="Tracey A."/>
            <person name="Trevanion S."/>
            <person name="Tromans A.C."/>
            <person name="d'Urso M."/>
            <person name="Verduzco D."/>
            <person name="Villasana D."/>
            <person name="Waldron L."/>
            <person name="Wall M."/>
            <person name="Wang Q."/>
            <person name="Warren J."/>
            <person name="Warry G.L."/>
            <person name="Wei X."/>
            <person name="West A."/>
            <person name="Whitehead S.L."/>
            <person name="Whiteley M.N."/>
            <person name="Wilkinson J.E."/>
            <person name="Willey D.L."/>
            <person name="Williams G."/>
            <person name="Williams L."/>
            <person name="Williamson A."/>
            <person name="Williamson H."/>
            <person name="Wilming L."/>
            <person name="Woodmansey R.L."/>
            <person name="Wray P.W."/>
            <person name="Yen J."/>
            <person name="Zhang J."/>
            <person name="Zhou J."/>
            <person name="Zoghbi H."/>
            <person name="Zorilla S."/>
            <person name="Buck D."/>
            <person name="Reinhardt R."/>
            <person name="Poustka A."/>
            <person name="Rosenthal A."/>
            <person name="Lehrach H."/>
            <person name="Meindl A."/>
            <person name="Minx P.J."/>
            <person name="Hillier L.W."/>
            <person name="Willard H.F."/>
            <person name="Wilson R.K."/>
            <person name="Waterston R.H."/>
            <person name="Rice C.M."/>
            <person name="Vaudin M."/>
            <person name="Coulson A."/>
            <person name="Nelson D.L."/>
            <person name="Weinstock G."/>
            <person name="Sulston J.E."/>
            <person name="Durbin R.M."/>
            <person name="Hubbard T."/>
            <person name="Gibbs R.A."/>
            <person name="Beck S."/>
            <person name="Rogers J."/>
            <person name="Bentley D.R."/>
        </authorList>
    </citation>
    <scope>NUCLEOTIDE SEQUENCE [LARGE SCALE GENOMIC DNA]</scope>
</reference>
<reference key="4">
    <citation type="submission" date="2005-09" db="EMBL/GenBank/DDBJ databases">
        <authorList>
            <person name="Mural R.J."/>
            <person name="Istrail S."/>
            <person name="Sutton G.G."/>
            <person name="Florea L."/>
            <person name="Halpern A.L."/>
            <person name="Mobarry C.M."/>
            <person name="Lippert R."/>
            <person name="Walenz B."/>
            <person name="Shatkay H."/>
            <person name="Dew I."/>
            <person name="Miller J.R."/>
            <person name="Flanigan M.J."/>
            <person name="Edwards N.J."/>
            <person name="Bolanos R."/>
            <person name="Fasulo D."/>
            <person name="Halldorsson B.V."/>
            <person name="Hannenhalli S."/>
            <person name="Turner R."/>
            <person name="Yooseph S."/>
            <person name="Lu F."/>
            <person name="Nusskern D.R."/>
            <person name="Shue B.C."/>
            <person name="Zheng X.H."/>
            <person name="Zhong F."/>
            <person name="Delcher A.L."/>
            <person name="Huson D.H."/>
            <person name="Kravitz S.A."/>
            <person name="Mouchard L."/>
            <person name="Reinert K."/>
            <person name="Remington K.A."/>
            <person name="Clark A.G."/>
            <person name="Waterman M.S."/>
            <person name="Eichler E.E."/>
            <person name="Adams M.D."/>
            <person name="Hunkapiller M.W."/>
            <person name="Myers E.W."/>
            <person name="Venter J.C."/>
        </authorList>
    </citation>
    <scope>NUCLEOTIDE SEQUENCE [LARGE SCALE GENOMIC DNA]</scope>
    <scope>VARIANT LEU-349</scope>
</reference>
<reference key="5">
    <citation type="journal article" date="2004" name="Genome Res.">
        <title>The status, quality, and expansion of the NIH full-length cDNA project: the Mammalian Gene Collection (MGC).</title>
        <authorList>
            <consortium name="The MGC Project Team"/>
        </authorList>
    </citation>
    <scope>NUCLEOTIDE SEQUENCE [LARGE SCALE MRNA] (ISOFORM 1)</scope>
    <scope>VARIANT LEU-349</scope>
    <source>
        <tissue>Muscle</tissue>
    </source>
</reference>
<reference key="6">
    <citation type="journal article" date="2006" name="Am. J. Hum. Genet.">
        <title>Disruption of POF1B binding to nonmuscle actin filaments is associated with premature ovarian failure.</title>
        <authorList>
            <person name="Lacombe A."/>
            <person name="Lee H."/>
            <person name="Zahed L."/>
            <person name="Choucair M."/>
            <person name="Muller J.-M."/>
            <person name="Nelson S.F."/>
            <person name="Salameh W."/>
            <person name="Vilain E."/>
        </authorList>
    </citation>
    <scope>FUNCTION</scope>
    <scope>INTERACTION WITH ACTIN</scope>
    <scope>VARIANT POF2B GLN-329</scope>
    <scope>CHARACTERIZATION OF VARIANT POF2B GLN-329</scope>
</reference>
<reference key="7">
    <citation type="journal article" date="2011" name="J. Cell Sci.">
        <title>The POF1B candidate gene for premature ovarian failure regulates epithelial polarity.</title>
        <authorList>
            <person name="Padovano V."/>
            <person name="Lucibello I."/>
            <person name="Alari V."/>
            <person name="Della Mina P."/>
            <person name="Crespi A."/>
            <person name="Ferrari I."/>
            <person name="Recagni M."/>
            <person name="Lattuada D."/>
            <person name="Righi M."/>
            <person name="Toniolo D."/>
            <person name="Villa A."/>
            <person name="Pietrini G."/>
        </authorList>
    </citation>
    <scope>FUNCTION</scope>
    <scope>SUBCELLULAR LOCATION</scope>
    <scope>CHARACTERIZATION OF VARIANT POF2B GLN-329</scope>
    <source>
        <tissue>Jejunum</tissue>
    </source>
</reference>
<reference key="8">
    <citation type="journal article" date="2014" name="J. Proteomics">
        <title>An enzyme assisted RP-RPLC approach for in-depth analysis of human liver phosphoproteome.</title>
        <authorList>
            <person name="Bian Y."/>
            <person name="Song C."/>
            <person name="Cheng K."/>
            <person name="Dong M."/>
            <person name="Wang F."/>
            <person name="Huang J."/>
            <person name="Sun D."/>
            <person name="Wang L."/>
            <person name="Ye M."/>
            <person name="Zou H."/>
        </authorList>
    </citation>
    <scope>IDENTIFICATION BY MASS SPECTROMETRY [LARGE SCALE ANALYSIS]</scope>
    <source>
        <tissue>Liver</tissue>
    </source>
</reference>
<reference key="9">
    <citation type="journal article" date="2022" name="Eur. J. Hum. Genet.">
        <title>Meiotic genes in premature ovarian insufficiency: variants in HROB and REC8 as likely genetic causes.</title>
        <authorList>
            <person name="Tucker E.J."/>
            <person name="Bell K.M."/>
            <person name="Robevska G."/>
            <person name="van den Bergen J."/>
            <person name="Ayers K.L."/>
            <person name="Listyasari N."/>
            <person name="Faradz S.M."/>
            <person name="Dulon J."/>
            <person name="Bakhshalizadeh S."/>
            <person name="Sreenivasan R."/>
            <person name="Nouyou B."/>
            <person name="Carre W."/>
            <person name="Akloul L."/>
            <person name="Duros S."/>
            <person name="Domin-Bernhard M."/>
            <person name="Belaud-Rotureau M.A."/>
            <person name="Touraine P."/>
            <person name="Jaillard S."/>
            <person name="Sinclair A.H."/>
        </authorList>
    </citation>
    <scope>VARIANT POF2B GLN-329</scope>
</reference>
<sequence>MSSSYWSETSSSSCGTQQLPEVLQCQPQHYHCYHQSSQAQQPPEKNVVYERVRTYSGPMNKVVQALDPFNSREVLSPLKTTSSYQNLVWSDHSQELHSPTLKISTCAPSTLHITQNTEQELHSPTVKLTTYPQTTIRKYVVQNPEQEPLSQFLRGSHFFPGNNVIYEKTIRKVEKLNTDQGCHPQAQCHHHIIQQPQVIHSAHWQQPDSSQQIQAITGNNPISTHIGNELCHSGSSQICEQVIIQDDGPEKLDPRYFGELLADLSRKNTDLYHCLLEHLQRIGGSKQDFESTDESEDIESLIPKGLSEFTKQQIRYILQMRGMSDKSLRLVLSTFSNIREELGHLQNDMTSLENDKMRLEKDLSFKDTQLKEYEELLASVRANNHQQQQGLQDSSSKCQALEENNLSLRHTLSDMEYRLKELEYCKRNLEQENQNLRMQVSETCTGPMLQAKMDEIGNHYTEMVKNLRMEKDREICRLRSQLNQYHKDVSKREGSCSDFQFKLHELTSLLEEKDSLIKRQSEELSKLRQEIYSSHNQPSTGGRTTITTKKYRTQYPILGLLYDDYEYIPPGSETQTIVIEKTEDKYTCP</sequence>
<name>POF1B_HUMAN</name>
<protein>
    <recommendedName>
        <fullName>Protein POF1B</fullName>
    </recommendedName>
    <alternativeName>
        <fullName>Premature ovarian failure protein 1B</fullName>
    </alternativeName>
</protein>
<organism>
    <name type="scientific">Homo sapiens</name>
    <name type="common">Human</name>
    <dbReference type="NCBI Taxonomy" id="9606"/>
    <lineage>
        <taxon>Eukaryota</taxon>
        <taxon>Metazoa</taxon>
        <taxon>Chordata</taxon>
        <taxon>Craniata</taxon>
        <taxon>Vertebrata</taxon>
        <taxon>Euteleostomi</taxon>
        <taxon>Mammalia</taxon>
        <taxon>Eutheria</taxon>
        <taxon>Euarchontoglires</taxon>
        <taxon>Primates</taxon>
        <taxon>Haplorrhini</taxon>
        <taxon>Catarrhini</taxon>
        <taxon>Hominidae</taxon>
        <taxon>Homo</taxon>
    </lineage>
</organism>
<evidence type="ECO:0000255" key="1"/>
<evidence type="ECO:0000269" key="2">
    <source>
    </source>
</evidence>
<evidence type="ECO:0000269" key="3">
    <source>
    </source>
</evidence>
<evidence type="ECO:0000269" key="4">
    <source>
    </source>
</evidence>
<evidence type="ECO:0000269" key="5">
    <source>
    </source>
</evidence>
<evidence type="ECO:0000269" key="6">
    <source>
    </source>
</evidence>
<evidence type="ECO:0000269" key="7">
    <source>
    </source>
</evidence>
<evidence type="ECO:0000269" key="8">
    <source ref="4"/>
</evidence>
<evidence type="ECO:0000303" key="9">
    <source>
    </source>
</evidence>
<evidence type="ECO:0000303" key="10">
    <source>
    </source>
</evidence>
<evidence type="ECO:0000305" key="11"/>
<gene>
    <name type="primary">POF1B</name>
</gene>
<accession>Q8WVV4</accession>
<accession>A8K2U5</accession>
<accession>Q5H9E9</accession>
<accession>Q5H9F0</accession>
<accession>Q8NG12</accession>
<accession>Q9H5Y2</accession>
<accession>Q9H738</accession>
<accession>Q9H744</accession>
<comment type="function">
    <text evidence="5 6">Plays a key role in the organization of epithelial monolayers by regulating the actin cytoskeleton. May be involved in ovary development.</text>
</comment>
<comment type="subunit">
    <text evidence="5">Interacts with nonmuscle actin.</text>
</comment>
<comment type="interaction">
    <interactant intactId="EBI-11986735">
        <id>Q8WVV4-1</id>
    </interactant>
    <interactant intactId="EBI-2875746">
        <id>P40617</id>
        <label>ARL4A</label>
    </interactant>
    <organismsDiffer>false</organismsDiffer>
    <experiments>3</experiments>
</comment>
<comment type="interaction">
    <interactant intactId="EBI-11986735">
        <id>Q8WVV4-1</id>
    </interactant>
    <interactant intactId="EBI-765407">
        <id>P41182</id>
        <label>BCL6</label>
    </interactant>
    <organismsDiffer>false</organismsDiffer>
    <experiments>3</experiments>
</comment>
<comment type="interaction">
    <interactant intactId="EBI-11986735">
        <id>Q8WVV4-1</id>
    </interactant>
    <interactant intactId="EBI-747133">
        <id>P27658</id>
        <label>COL8A1</label>
    </interactant>
    <organismsDiffer>false</organismsDiffer>
    <experiments>3</experiments>
</comment>
<comment type="interaction">
    <interactant intactId="EBI-11986735">
        <id>Q8WVV4-1</id>
    </interactant>
    <interactant intactId="EBI-6658203">
        <id>Q86YD7</id>
        <label>FAM90A1</label>
    </interactant>
    <organismsDiffer>false</organismsDiffer>
    <experiments>3</experiments>
</comment>
<comment type="interaction">
    <interactant intactId="EBI-11986735">
        <id>Q8WVV4-1</id>
    </interactant>
    <interactant intactId="EBI-725515">
        <id>O43559</id>
        <label>FRS3</label>
    </interactant>
    <organismsDiffer>false</organismsDiffer>
    <experiments>3</experiments>
</comment>
<comment type="interaction">
    <interactant intactId="EBI-11986735">
        <id>Q8WVV4-1</id>
    </interactant>
    <interactant intactId="EBI-744104">
        <id>P55040</id>
        <label>GEM</label>
    </interactant>
    <organismsDiffer>false</organismsDiffer>
    <experiments>3</experiments>
</comment>
<comment type="interaction">
    <interactant intactId="EBI-11986735">
        <id>Q8WVV4-1</id>
    </interactant>
    <interactant intactId="EBI-11955401">
        <id>Q86VF2-5</id>
        <label>IGFN1</label>
    </interactant>
    <organismsDiffer>false</organismsDiffer>
    <experiments>3</experiments>
</comment>
<comment type="interaction">
    <interactant intactId="EBI-11986735">
        <id>Q8WVV4-1</id>
    </interactant>
    <interactant intactId="EBI-4397613">
        <id>Q7L273</id>
        <label>KCTD9</label>
    </interactant>
    <organismsDiffer>false</organismsDiffer>
    <experiments>3</experiments>
</comment>
<comment type="interaction">
    <interactant intactId="EBI-11986735">
        <id>Q8WVV4-1</id>
    </interactant>
    <interactant intactId="EBI-6426443">
        <id>Q2WGJ6</id>
        <label>KLHL38</label>
    </interactant>
    <organismsDiffer>false</organismsDiffer>
    <experiments>3</experiments>
</comment>
<comment type="interaction">
    <interactant intactId="EBI-11986735">
        <id>Q8WVV4-1</id>
    </interactant>
    <interactant intactId="EBI-10274069">
        <id>Q8TCE9</id>
        <label>LGALS14</label>
    </interactant>
    <organismsDiffer>false</organismsDiffer>
    <experiments>3</experiments>
</comment>
<comment type="interaction">
    <interactant intactId="EBI-11986735">
        <id>Q8WVV4-1</id>
    </interactant>
    <interactant intactId="EBI-368321">
        <id>O60437</id>
        <label>PPL</label>
    </interactant>
    <organismsDiffer>false</organismsDiffer>
    <experiments>3</experiments>
</comment>
<comment type="interaction">
    <interactant intactId="EBI-11986735">
        <id>Q8WVV4-1</id>
    </interactant>
    <interactant intactId="EBI-10188956">
        <id>O75679</id>
        <label>RFPL3</label>
    </interactant>
    <organismsDiffer>false</organismsDiffer>
    <experiments>3</experiments>
</comment>
<comment type="interaction">
    <interactant intactId="EBI-11986735">
        <id>Q8WVV4-1</id>
    </interactant>
    <interactant intactId="EBI-745392">
        <id>Q9BSW7</id>
        <label>SYT17</label>
    </interactant>
    <organismsDiffer>false</organismsDiffer>
    <experiments>3</experiments>
</comment>
<comment type="subcellular location">
    <subcellularLocation>
        <location evidence="6">Cell junction</location>
        <location evidence="6">Tight junction</location>
    </subcellularLocation>
</comment>
<comment type="alternative products">
    <event type="alternative splicing"/>
    <isoform>
        <id>Q8WVV4-2</id>
        <name>2</name>
        <sequence type="displayed"/>
    </isoform>
    <isoform>
        <id>Q8WVV4-1</id>
        <name>1</name>
        <sequence type="described" ref="VSP_021151"/>
    </isoform>
    <isoform>
        <id>Q8WVV4-3</id>
        <name>3</name>
        <sequence type="described" ref="VSP_021149 VSP_021150"/>
    </isoform>
</comment>
<comment type="disease" evidence="5 6 7">
    <disease id="DI-02192">
        <name>Premature ovarian failure 2B</name>
        <acronym>POF2B</acronym>
        <description>An ovarian disorder defined as the cessation of ovarian function under the age of 40 years. It is characterized by oligomenorrhea or amenorrhea, in the presence of elevated levels of serum gonadotropins and low estradiol.</description>
        <dbReference type="MIM" id="300604"/>
    </disease>
    <text>The disease is caused by variants affecting the gene represented in this entry.</text>
</comment>
<comment type="sequence caution" evidence="11">
    <conflict type="erroneous initiation">
        <sequence resource="EMBL-CDS" id="BAB15061"/>
    </conflict>
    <text>Truncated N-terminus.</text>
</comment>
<comment type="sequence caution" evidence="11">
    <conflict type="frameshift">
        <sequence resource="EMBL-CDS" id="BAB15485"/>
    </conflict>
</comment>